<protein>
    <recommendedName>
        <fullName evidence="10">3-phosphoshikimate 1-carboxyvinyltransferase, chloroplastic</fullName>
        <ecNumber evidence="5">2.5.1.19</ecNumber>
    </recommendedName>
    <alternativeName>
        <fullName evidence="10">5-enolpyruvylshikimate-3-phosphate synthase</fullName>
        <shortName evidence="10">EPSP synthase</shortName>
    </alternativeName>
</protein>
<feature type="transit peptide" description="Chloroplast" evidence="12">
    <location>
        <begin position="1"/>
        <end position="72"/>
    </location>
</feature>
<feature type="chain" id="PRO_0000002290" description="3-phosphoshikimate 1-carboxyvinyltransferase, chloroplastic">
    <location>
        <begin position="73"/>
        <end position="516"/>
    </location>
</feature>
<feature type="active site" description="Proton acceptor" evidence="1">
    <location>
        <position position="403"/>
    </location>
</feature>
<feature type="binding site" evidence="1">
    <location>
        <position position="95"/>
    </location>
    <ligand>
        <name>3-phosphoshikimate</name>
        <dbReference type="ChEBI" id="CHEBI:145989"/>
    </ligand>
</feature>
<feature type="binding site" evidence="2">
    <location>
        <position position="95"/>
    </location>
    <ligand>
        <name>phosphoenolpyruvate</name>
        <dbReference type="ChEBI" id="CHEBI:58702"/>
    </ligand>
</feature>
<feature type="binding site" evidence="1">
    <location>
        <position position="96"/>
    </location>
    <ligand>
        <name>3-phosphoshikimate</name>
        <dbReference type="ChEBI" id="CHEBI:145989"/>
    </ligand>
</feature>
<feature type="binding site" evidence="1">
    <location>
        <position position="100"/>
    </location>
    <ligand>
        <name>3-phosphoshikimate</name>
        <dbReference type="ChEBI" id="CHEBI:145989"/>
    </ligand>
</feature>
<feature type="binding site" evidence="2">
    <location>
        <position position="173"/>
    </location>
    <ligand>
        <name>phosphoenolpyruvate</name>
        <dbReference type="ChEBI" id="CHEBI:58702"/>
    </ligand>
</feature>
<feature type="binding site" evidence="2">
    <location>
        <position position="203"/>
    </location>
    <ligand>
        <name>phosphoenolpyruvate</name>
        <dbReference type="ChEBI" id="CHEBI:58702"/>
    </ligand>
</feature>
<feature type="binding site" evidence="1">
    <location>
        <position position="250"/>
    </location>
    <ligand>
        <name>3-phosphoshikimate</name>
        <dbReference type="ChEBI" id="CHEBI:145989"/>
    </ligand>
</feature>
<feature type="binding site" evidence="1">
    <location>
        <position position="251"/>
    </location>
    <ligand>
        <name>3-phosphoshikimate</name>
        <dbReference type="ChEBI" id="CHEBI:145989"/>
    </ligand>
</feature>
<feature type="binding site" evidence="1">
    <location>
        <position position="252"/>
    </location>
    <ligand>
        <name>3-phosphoshikimate</name>
        <dbReference type="ChEBI" id="CHEBI:145989"/>
    </ligand>
</feature>
<feature type="binding site" evidence="2">
    <location>
        <position position="252"/>
    </location>
    <ligand>
        <name>phosphoenolpyruvate</name>
        <dbReference type="ChEBI" id="CHEBI:58702"/>
    </ligand>
</feature>
<feature type="binding site" evidence="1">
    <location>
        <position position="278"/>
    </location>
    <ligand>
        <name>3-phosphoshikimate</name>
        <dbReference type="ChEBI" id="CHEBI:145989"/>
    </ligand>
</feature>
<feature type="binding site" evidence="1">
    <location>
        <position position="403"/>
    </location>
    <ligand>
        <name>3-phosphoshikimate</name>
        <dbReference type="ChEBI" id="CHEBI:145989"/>
    </ligand>
</feature>
<feature type="binding site" evidence="1">
    <location>
        <position position="430"/>
    </location>
    <ligand>
        <name>3-phosphoshikimate</name>
        <dbReference type="ChEBI" id="CHEBI:145989"/>
    </ligand>
</feature>
<feature type="binding site" evidence="2">
    <location>
        <position position="434"/>
    </location>
    <ligand>
        <name>phosphoenolpyruvate</name>
        <dbReference type="ChEBI" id="CHEBI:58702"/>
    </ligand>
</feature>
<feature type="binding site" evidence="2">
    <location>
        <position position="476"/>
    </location>
    <ligand>
        <name>phosphoenolpyruvate</name>
        <dbReference type="ChEBI" id="CHEBI:58702"/>
    </ligand>
</feature>
<feature type="binding site" evidence="2">
    <location>
        <position position="501"/>
    </location>
    <ligand>
        <name>phosphoenolpyruvate</name>
        <dbReference type="ChEBI" id="CHEBI:58702"/>
    </ligand>
</feature>
<feature type="mutagenesis site" description="This mutant becomes resistant to glyphosate due to a lower affinity. Shows a slight reduction in EPSP synthase activity." evidence="5">
    <original>G</original>
    <variation>A</variation>
    <location>
        <position position="173"/>
    </location>
</feature>
<sequence length="516" mass="55537">MAQINNMAQGIQTLNPNSNFHKPQVPKSSSFLVFGSKKLKNSANSMLVLKKDSIFMQKFCSFRISASVATAQKPSEIVLQPIKEISGTVKLPGSKSLSNRILLLAALSEGTTVVDNLLSSDDIHYMLGALKTLGLHVEEDSANQRAVVEGCGGLFPVGKESKEEIQLFLGNAGTAMRPLTAAVTVAGGNSRYVLDGVPRMRERPISDLVDGLKQLGAEVDCFLGTKCPPVRIVSKGGLPGGKVKLSGSISSQYLTALLMAAPLALGDVEIEIIDKLISVPYVEMTLKLMERFGISVEHSSSWDRFFVRGGQKYKSPGKAFVEGDASSASYFLAGAAVTGGTITVEGCGTNSLQGDVKFAEVLEKMGAEVTWTENSVTVKGPPRSSSGRKHLRAIDVNMNKMPDVAMTLAVVALYADGPTAIRDVASWRVKETERMIAICTELRKLGATVEEGPDYCIITPPEKLNVTDIDTYDDHRMAMAFSLAACADVPVTINDPGCTRKTFPNYFDVLQQYSKH</sequence>
<name>AROA_PETHY</name>
<dbReference type="EC" id="2.5.1.19" evidence="5"/>
<dbReference type="EMBL" id="M21084">
    <property type="protein sequence ID" value="AAA33699.1"/>
    <property type="molecule type" value="mRNA"/>
</dbReference>
<dbReference type="PIR" id="A28198">
    <property type="entry name" value="XUPJVS"/>
</dbReference>
<dbReference type="SMR" id="P11043"/>
<dbReference type="UniPathway" id="UPA00053">
    <property type="reaction ID" value="UER00089"/>
</dbReference>
<dbReference type="GO" id="GO:0009507">
    <property type="term" value="C:chloroplast"/>
    <property type="evidence" value="ECO:0007669"/>
    <property type="project" value="UniProtKB-SubCell"/>
</dbReference>
<dbReference type="GO" id="GO:0003866">
    <property type="term" value="F:3-phosphoshikimate 1-carboxyvinyltransferase activity"/>
    <property type="evidence" value="ECO:0007669"/>
    <property type="project" value="UniProtKB-EC"/>
</dbReference>
<dbReference type="GO" id="GO:0008652">
    <property type="term" value="P:amino acid biosynthetic process"/>
    <property type="evidence" value="ECO:0007669"/>
    <property type="project" value="UniProtKB-KW"/>
</dbReference>
<dbReference type="GO" id="GO:0009073">
    <property type="term" value="P:aromatic amino acid family biosynthetic process"/>
    <property type="evidence" value="ECO:0007669"/>
    <property type="project" value="UniProtKB-KW"/>
</dbReference>
<dbReference type="GO" id="GO:0009423">
    <property type="term" value="P:chorismate biosynthetic process"/>
    <property type="evidence" value="ECO:0007669"/>
    <property type="project" value="UniProtKB-UniPathway"/>
</dbReference>
<dbReference type="GO" id="GO:0007623">
    <property type="term" value="P:circadian rhythm"/>
    <property type="evidence" value="ECO:0000270"/>
    <property type="project" value="UniProtKB"/>
</dbReference>
<dbReference type="GO" id="GO:0010597">
    <property type="term" value="P:green leaf volatile biosynthetic process"/>
    <property type="evidence" value="ECO:0000314"/>
    <property type="project" value="UniProtKB"/>
</dbReference>
<dbReference type="GO" id="GO:0009635">
    <property type="term" value="P:response to herbicide"/>
    <property type="evidence" value="ECO:0007669"/>
    <property type="project" value="UniProtKB-KW"/>
</dbReference>
<dbReference type="CDD" id="cd01556">
    <property type="entry name" value="EPSP_synthase"/>
    <property type="match status" value="1"/>
</dbReference>
<dbReference type="FunFam" id="3.65.10.10:FF:000004">
    <property type="entry name" value="3-phosphoshikimate 1-carboxyvinyltransferase"/>
    <property type="match status" value="1"/>
</dbReference>
<dbReference type="FunFam" id="3.65.10.10:FF:000009">
    <property type="entry name" value="3-phosphoshikimate 1-carboxyvinyltransferase"/>
    <property type="match status" value="1"/>
</dbReference>
<dbReference type="Gene3D" id="3.65.10.10">
    <property type="entry name" value="Enolpyruvate transferase domain"/>
    <property type="match status" value="2"/>
</dbReference>
<dbReference type="HAMAP" id="MF_00210">
    <property type="entry name" value="EPSP_synth"/>
    <property type="match status" value="1"/>
</dbReference>
<dbReference type="InterPro" id="IPR001986">
    <property type="entry name" value="Enolpyruvate_Tfrase_dom"/>
</dbReference>
<dbReference type="InterPro" id="IPR036968">
    <property type="entry name" value="Enolpyruvate_Tfrase_sf"/>
</dbReference>
<dbReference type="InterPro" id="IPR006264">
    <property type="entry name" value="EPSP_synthase"/>
</dbReference>
<dbReference type="InterPro" id="IPR023193">
    <property type="entry name" value="EPSP_synthase_CS"/>
</dbReference>
<dbReference type="InterPro" id="IPR013792">
    <property type="entry name" value="RNA3'P_cycl/enolpyr_Trfase_a/b"/>
</dbReference>
<dbReference type="NCBIfam" id="TIGR01356">
    <property type="entry name" value="aroA"/>
    <property type="match status" value="1"/>
</dbReference>
<dbReference type="PANTHER" id="PTHR21090">
    <property type="entry name" value="AROM/DEHYDROQUINATE SYNTHASE"/>
    <property type="match status" value="1"/>
</dbReference>
<dbReference type="PANTHER" id="PTHR21090:SF5">
    <property type="entry name" value="PENTAFUNCTIONAL AROM POLYPEPTIDE"/>
    <property type="match status" value="1"/>
</dbReference>
<dbReference type="Pfam" id="PF00275">
    <property type="entry name" value="EPSP_synthase"/>
    <property type="match status" value="1"/>
</dbReference>
<dbReference type="SUPFAM" id="SSF55205">
    <property type="entry name" value="EPT/RTPC-like"/>
    <property type="match status" value="1"/>
</dbReference>
<dbReference type="PROSITE" id="PS00104">
    <property type="entry name" value="EPSP_SYNTHASE_1"/>
    <property type="match status" value="1"/>
</dbReference>
<dbReference type="PROSITE" id="PS00885">
    <property type="entry name" value="EPSP_SYNTHASE_2"/>
    <property type="match status" value="1"/>
</dbReference>
<proteinExistence type="evidence at protein level"/>
<evidence type="ECO:0000250" key="1">
    <source>
        <dbReference type="UniProtKB" id="P0A6D3"/>
    </source>
</evidence>
<evidence type="ECO:0000250" key="2">
    <source>
        <dbReference type="UniProtKB" id="P9WPY5"/>
    </source>
</evidence>
<evidence type="ECO:0000255" key="3"/>
<evidence type="ECO:0000269" key="4">
    <source>
    </source>
</evidence>
<evidence type="ECO:0000269" key="5">
    <source>
    </source>
</evidence>
<evidence type="ECO:0000269" key="6">
    <source>
    </source>
</evidence>
<evidence type="ECO:0000269" key="7">
    <source>
    </source>
</evidence>
<evidence type="ECO:0000269" key="8">
    <source>
    </source>
</evidence>
<evidence type="ECO:0000303" key="9">
    <source>
    </source>
</evidence>
<evidence type="ECO:0000303" key="10">
    <source>
    </source>
</evidence>
<evidence type="ECO:0000305" key="11"/>
<evidence type="ECO:0000305" key="12">
    <source>
    </source>
</evidence>
<reference key="1">
    <citation type="journal article" date="1988" name="J. Biol. Chem.">
        <title>Structure, expression, and evolution of the 5-enolpyruvylshikimate-3-phosphate synthase genes of petunia and tomato.</title>
        <authorList>
            <person name="Gasser C.S."/>
            <person name="Winter J.A."/>
            <person name="Hironaka C.M."/>
            <person name="Shah D.M."/>
        </authorList>
    </citation>
    <scope>NUCLEOTIDE SEQUENCE [MRNA]</scope>
    <scope>TISSUE SPECIFICITY</scope>
    <source>
        <strain>cv. Mitchell</strain>
    </source>
</reference>
<reference key="2">
    <citation type="journal article" date="1991" name="J. Biol. Chem.">
        <title>Site-directed mutagenesis of a conserved region of the 5-enolpyruvylshikimate-3-phosphate synthase active site.</title>
        <authorList>
            <person name="Padgette S.R."/>
            <person name="Re D.B."/>
            <person name="Gasser C.S."/>
            <person name="Eicholtz D.A."/>
            <person name="Frazier R.B."/>
            <person name="Hironaka C.M."/>
            <person name="Levine E.B."/>
            <person name="Shah D.M."/>
            <person name="Fraley R.T."/>
            <person name="Kishore G.M."/>
        </authorList>
    </citation>
    <scope>MUTAGENESIS OF GLY-173</scope>
    <scope>FUNCTION</scope>
    <scope>CATALYTIC ACTIVITY</scope>
    <scope>BIOPHYSICOCHEMICAL PROPERTIES</scope>
    <scope>ACTIVITY REGULATION</scope>
    <scope>PATHWAY</scope>
</reference>
<reference key="3">
    <citation type="journal article" date="2005" name="Plant Cell">
        <title>ODORANT1 regulates fragrance biosynthesis in petunia flowers.</title>
        <authorList>
            <person name="Verdonk J.C."/>
            <person name="Haring M.A."/>
            <person name="van Tunen A.J."/>
            <person name="Schuurink R.C."/>
        </authorList>
    </citation>
    <scope>FUNCTION</scope>
    <scope>INDUCTION BY ODO1</scope>
    <source>
        <strain>cv. W115</strain>
    </source>
</reference>
<reference key="4">
    <citation type="journal article" date="2012" name="Plant Cell">
        <title>The R2R3-MYB-like regulatory factor EOBI, acting downstream of EOBII, regulates scent production by activating ODO1 and structural scent-related genes in petunia.</title>
        <authorList>
            <person name="Spitzer-Rimon B."/>
            <person name="Farhi M."/>
            <person name="Albo B."/>
            <person name="Cna'ani A."/>
            <person name="Ben Zvi M.M."/>
            <person name="Masci T."/>
            <person name="Edelbaum O."/>
            <person name="Yu Y."/>
            <person name="Shklarman E."/>
            <person name="Ovadis M."/>
            <person name="Vainstein A."/>
        </authorList>
    </citation>
    <scope>INDUCTION BY EOBI</scope>
    <source>
        <strain>cv. W115</strain>
    </source>
</reference>
<reference key="5">
    <citation type="journal article" date="2015" name="Proc. Natl. Acad. Sci. U.S.A.">
        <title>Circadian clock gene LATE ELONGATED HYPOCOTYL directly regulates the timing of floral scent emission in Petunia.</title>
        <authorList>
            <person name="Fenske M.P."/>
            <person name="Hewett Hazelton K.D."/>
            <person name="Hempton A.K."/>
            <person name="Shim J.S."/>
            <person name="Yamamoto B.M."/>
            <person name="Riffell J.A."/>
            <person name="Imaizumi T."/>
        </authorList>
    </citation>
    <scope>REPRESSION BY LHY</scope>
</reference>
<comment type="function">
    <text evidence="5">Catalyzes the transfer of the enolpyruvyl moiety of phosphoenolpyruvate (PEP) to the 5-hydroxyl of shikimate-3-phosphate (S3P) to produce enolpyruvyl shikimate-3-phosphate and inorganic phosphate (PubMed:1939260). Involved in the accumulation of volatile benzoides in flowers, scent attracting pollinators (e.g. the night-active hawkmoth pollinator Manduca sexta) (PubMed:15805488).</text>
</comment>
<comment type="catalytic activity">
    <reaction evidence="5">
        <text>3-phosphoshikimate + phosphoenolpyruvate = 5-O-(1-carboxyvinyl)-3-phosphoshikimate + phosphate</text>
        <dbReference type="Rhea" id="RHEA:21256"/>
        <dbReference type="ChEBI" id="CHEBI:43474"/>
        <dbReference type="ChEBI" id="CHEBI:57701"/>
        <dbReference type="ChEBI" id="CHEBI:58702"/>
        <dbReference type="ChEBI" id="CHEBI:145989"/>
        <dbReference type="EC" id="2.5.1.19"/>
    </reaction>
    <physiologicalReaction direction="left-to-right" evidence="12">
        <dbReference type="Rhea" id="RHEA:21257"/>
    </physiologicalReaction>
</comment>
<comment type="activity regulation">
    <text evidence="5">Competitively inhibited by glyphosate.</text>
</comment>
<comment type="biophysicochemical properties">
    <kinetics>
        <KM evidence="5">5 uM for phosphoenolpyruvate</KM>
        <KM evidence="5">7.8 uM for 3-phosphoshikimate</KM>
        <KM evidence="5">1.9 uM for 5-O-(1-carboxyvinyl)-3-phosphoshikimate</KM>
        <KM evidence="5">0.59 mM for phosphate</KM>
        <text evidence="5">kcat is 36 sec(-1).</text>
    </kinetics>
</comment>
<comment type="pathway">
    <text evidence="12">Metabolic intermediate biosynthesis; chorismate biosynthesis; chorismate from D-erythrose 4-phosphate and phosphoenolpyruvate: step 6/7.</text>
</comment>
<comment type="subcellular location">
    <subcellularLocation>
        <location evidence="3">Plastid</location>
        <location evidence="3">Chloroplast</location>
    </subcellularLocation>
</comment>
<comment type="tissue specificity">
    <text evidence="8">Mostly expressed in flower petals, and, to a lower extent, in roots, stems and anthers, but barely in leaves.</text>
</comment>
<comment type="induction">
    <text evidence="4 6 7">Circadian-regulation with peak levels occurring at the end of the light period in flowers; this expression is monitored by ODO1-mediated induction and by LHY binding and repression to cis-regulatory evening elements in its promoter (PubMed:15805488, PubMed:26124104). Triggered by EOBI in flowers (PubMed:23275577).</text>
</comment>
<comment type="miscellaneous">
    <text evidence="9">This enzyme is the target of the potent, broad-spectrum herbicide, glyphosate [n-(phosphonomethyl)glycine]. Overproduction of EPSP leads to glyphosate tolerance.</text>
</comment>
<comment type="similarity">
    <text evidence="11">Belongs to the EPSP synthase family.</text>
</comment>
<organism>
    <name type="scientific">Petunia hybrida</name>
    <name type="common">Petunia</name>
    <dbReference type="NCBI Taxonomy" id="4102"/>
    <lineage>
        <taxon>Eukaryota</taxon>
        <taxon>Viridiplantae</taxon>
        <taxon>Streptophyta</taxon>
        <taxon>Embryophyta</taxon>
        <taxon>Tracheophyta</taxon>
        <taxon>Spermatophyta</taxon>
        <taxon>Magnoliopsida</taxon>
        <taxon>eudicotyledons</taxon>
        <taxon>Gunneridae</taxon>
        <taxon>Pentapetalae</taxon>
        <taxon>asterids</taxon>
        <taxon>lamiids</taxon>
        <taxon>Solanales</taxon>
        <taxon>Solanaceae</taxon>
        <taxon>Petunioideae</taxon>
        <taxon>Petunia</taxon>
    </lineage>
</organism>
<accession>P11043</accession>
<gene>
    <name evidence="10" type="primary">EPSPS</name>
</gene>
<keyword id="KW-0028">Amino-acid biosynthesis</keyword>
<keyword id="KW-0057">Aromatic amino acid biosynthesis</keyword>
<keyword id="KW-0150">Chloroplast</keyword>
<keyword id="KW-0359">Herbicide resistance</keyword>
<keyword id="KW-0934">Plastid</keyword>
<keyword id="KW-0808">Transferase</keyword>
<keyword id="KW-0809">Transit peptide</keyword>